<proteinExistence type="inferred from homology"/>
<name>RAPZ_YERPB</name>
<protein>
    <recommendedName>
        <fullName evidence="1">RNase adapter protein RapZ</fullName>
    </recommendedName>
</protein>
<keyword id="KW-0067">ATP-binding</keyword>
<keyword id="KW-0342">GTP-binding</keyword>
<keyword id="KW-0547">Nucleotide-binding</keyword>
<keyword id="KW-0694">RNA-binding</keyword>
<comment type="function">
    <text evidence="1">Modulates the synthesis of GlmS, by affecting the processing and stability of the regulatory small RNA GlmZ. When glucosamine-6-phosphate (GlcN6P) concentrations are high in the cell, RapZ binds GlmZ and targets it to cleavage by RNase E. Consequently, GlmZ is inactivated and unable to activate GlmS synthesis. Under low GlcN6P concentrations, RapZ is sequestered and inactivated by an other regulatory small RNA, GlmY, preventing GlmZ degradation and leading to synthesis of GlmS.</text>
</comment>
<comment type="subunit">
    <text evidence="1">Homotrimer.</text>
</comment>
<comment type="similarity">
    <text evidence="1">Belongs to the RapZ-like family. RapZ subfamily.</text>
</comment>
<evidence type="ECO:0000255" key="1">
    <source>
        <dbReference type="HAMAP-Rule" id="MF_00636"/>
    </source>
</evidence>
<gene>
    <name evidence="1" type="primary">rapZ</name>
    <name type="ordered locus">YPTS_3715</name>
</gene>
<reference key="1">
    <citation type="submission" date="2008-04" db="EMBL/GenBank/DDBJ databases">
        <title>Complete sequence of Yersinia pseudotuberculosis PB1/+.</title>
        <authorList>
            <person name="Copeland A."/>
            <person name="Lucas S."/>
            <person name="Lapidus A."/>
            <person name="Glavina del Rio T."/>
            <person name="Dalin E."/>
            <person name="Tice H."/>
            <person name="Bruce D."/>
            <person name="Goodwin L."/>
            <person name="Pitluck S."/>
            <person name="Munk A.C."/>
            <person name="Brettin T."/>
            <person name="Detter J.C."/>
            <person name="Han C."/>
            <person name="Tapia R."/>
            <person name="Schmutz J."/>
            <person name="Larimer F."/>
            <person name="Land M."/>
            <person name="Hauser L."/>
            <person name="Challacombe J.F."/>
            <person name="Green L."/>
            <person name="Lindler L.E."/>
            <person name="Nikolich M.P."/>
            <person name="Richardson P."/>
        </authorList>
    </citation>
    <scope>NUCLEOTIDE SEQUENCE [LARGE SCALE GENOMIC DNA]</scope>
    <source>
        <strain>PB1/+</strain>
    </source>
</reference>
<organism>
    <name type="scientific">Yersinia pseudotuberculosis serotype IB (strain PB1/+)</name>
    <dbReference type="NCBI Taxonomy" id="502801"/>
    <lineage>
        <taxon>Bacteria</taxon>
        <taxon>Pseudomonadati</taxon>
        <taxon>Pseudomonadota</taxon>
        <taxon>Gammaproteobacteria</taxon>
        <taxon>Enterobacterales</taxon>
        <taxon>Yersiniaceae</taxon>
        <taxon>Yersinia</taxon>
    </lineage>
</organism>
<feature type="chain" id="PRO_1000130798" description="RNase adapter protein RapZ">
    <location>
        <begin position="1"/>
        <end position="284"/>
    </location>
</feature>
<feature type="region of interest" description="RNA-binding" evidence="1">
    <location>
        <begin position="266"/>
        <end position="284"/>
    </location>
</feature>
<feature type="binding site" evidence="1">
    <location>
        <begin position="8"/>
        <end position="15"/>
    </location>
    <ligand>
        <name>ATP</name>
        <dbReference type="ChEBI" id="CHEBI:30616"/>
    </ligand>
</feature>
<feature type="binding site" evidence="1">
    <location>
        <begin position="56"/>
        <end position="59"/>
    </location>
    <ligand>
        <name>GTP</name>
        <dbReference type="ChEBI" id="CHEBI:37565"/>
    </ligand>
</feature>
<sequence length="284" mass="32533">MVLMIVSGRSGSGKSVALRALEDMGFYCVDNLPVVLLPQLASTLADRNISAAVSIDVRNMPESPEVFEHAMTQLPDSFSPQLLFLDADRNTLIRRYSDTRRLHPLSAKNLSLESAIDEESDLLEPLRSRADLIIDTSEMSVHELAEMLRTRLLGKRERELTMVFESFGFKHGIPIDADYVFDVRFLPNPHWDPKLRPMTGLDKPVISFLDRHTEVHNFIYQTRSYLEQWLPMLETNNRSYLTVAIGCTGGKHRSVYVAEQLADYFRARGKNVQSRHRTLEKRKQ</sequence>
<dbReference type="EMBL" id="CP001048">
    <property type="protein sequence ID" value="ACC90668.1"/>
    <property type="molecule type" value="Genomic_DNA"/>
</dbReference>
<dbReference type="RefSeq" id="WP_002210113.1">
    <property type="nucleotide sequence ID" value="NZ_CP009780.1"/>
</dbReference>
<dbReference type="SMR" id="B2K419"/>
<dbReference type="GeneID" id="96663019"/>
<dbReference type="KEGG" id="ypb:YPTS_3715"/>
<dbReference type="PATRIC" id="fig|502801.10.peg.3172"/>
<dbReference type="GO" id="GO:0005524">
    <property type="term" value="F:ATP binding"/>
    <property type="evidence" value="ECO:0007669"/>
    <property type="project" value="UniProtKB-UniRule"/>
</dbReference>
<dbReference type="GO" id="GO:0005525">
    <property type="term" value="F:GTP binding"/>
    <property type="evidence" value="ECO:0007669"/>
    <property type="project" value="UniProtKB-UniRule"/>
</dbReference>
<dbReference type="GO" id="GO:0003723">
    <property type="term" value="F:RNA binding"/>
    <property type="evidence" value="ECO:0007669"/>
    <property type="project" value="UniProtKB-KW"/>
</dbReference>
<dbReference type="HAMAP" id="MF_00636">
    <property type="entry name" value="RapZ_like"/>
    <property type="match status" value="1"/>
</dbReference>
<dbReference type="InterPro" id="IPR027417">
    <property type="entry name" value="P-loop_NTPase"/>
</dbReference>
<dbReference type="InterPro" id="IPR005337">
    <property type="entry name" value="RapZ-like"/>
</dbReference>
<dbReference type="InterPro" id="IPR053930">
    <property type="entry name" value="RapZ-like_N"/>
</dbReference>
<dbReference type="InterPro" id="IPR053931">
    <property type="entry name" value="RapZ_C"/>
</dbReference>
<dbReference type="NCBIfam" id="NF003828">
    <property type="entry name" value="PRK05416.1"/>
    <property type="match status" value="1"/>
</dbReference>
<dbReference type="PANTHER" id="PTHR30448">
    <property type="entry name" value="RNASE ADAPTER PROTEIN RAPZ"/>
    <property type="match status" value="1"/>
</dbReference>
<dbReference type="PANTHER" id="PTHR30448:SF0">
    <property type="entry name" value="RNASE ADAPTER PROTEIN RAPZ"/>
    <property type="match status" value="1"/>
</dbReference>
<dbReference type="Pfam" id="PF22740">
    <property type="entry name" value="PapZ_C"/>
    <property type="match status" value="1"/>
</dbReference>
<dbReference type="Pfam" id="PF03668">
    <property type="entry name" value="RapZ-like_N"/>
    <property type="match status" value="1"/>
</dbReference>
<dbReference type="PIRSF" id="PIRSF005052">
    <property type="entry name" value="P-loopkin"/>
    <property type="match status" value="1"/>
</dbReference>
<dbReference type="SUPFAM" id="SSF52540">
    <property type="entry name" value="P-loop containing nucleoside triphosphate hydrolases"/>
    <property type="match status" value="1"/>
</dbReference>
<accession>B2K419</accession>